<protein>
    <recommendedName>
        <fullName>Probable archaeal histone 1</fullName>
    </recommendedName>
</protein>
<proteinExistence type="inferred from homology"/>
<comment type="function">
    <text evidence="1">Binds and compact DNA (95 to 150 base pairs) to form nucleosome-like structures that contain positive DNA supercoils. Increases the resistance of DNA to thermal denaturation (in vitro).</text>
</comment>
<comment type="subunit">
    <text evidence="1">Homodimer or heterodimer with another histone. Dimers then assemble into higher oligomers, with the DNA wrapped around the protein core (By similarity).</text>
</comment>
<comment type="subcellular location">
    <subcellularLocation>
        <location evidence="2">Cytoplasm</location>
    </subcellularLocation>
    <subcellularLocation>
        <location evidence="2">Chromosome</location>
    </subcellularLocation>
</comment>
<comment type="similarity">
    <text evidence="2">Belongs to the archaeal histone HMF family.</text>
</comment>
<accession>Q57632</accession>
<feature type="chain" id="PRO_0000154987" description="Probable archaeal histone 1">
    <location>
        <begin position="1"/>
        <end position="67"/>
    </location>
</feature>
<feature type="region of interest" description="Interaction with DNA" evidence="1">
    <location>
        <begin position="20"/>
        <end position="22"/>
    </location>
</feature>
<feature type="region of interest" description="Interaction with DNA" evidence="1">
    <location>
        <begin position="54"/>
        <end position="57"/>
    </location>
</feature>
<feature type="site" description="Interaction with DNA" evidence="1">
    <location>
        <position position="14"/>
    </location>
</feature>
<evidence type="ECO:0000250" key="1">
    <source>
        <dbReference type="UniProtKB" id="P19267"/>
    </source>
</evidence>
<evidence type="ECO:0000305" key="2"/>
<keyword id="KW-0158">Chromosome</keyword>
<keyword id="KW-0963">Cytoplasm</keyword>
<keyword id="KW-0238">DNA-binding</keyword>
<keyword id="KW-1185">Reference proteome</keyword>
<reference key="1">
    <citation type="journal article" date="1996" name="Science">
        <title>Complete genome sequence of the methanogenic archaeon, Methanococcus jannaschii.</title>
        <authorList>
            <person name="Bult C.J."/>
            <person name="White O."/>
            <person name="Olsen G.J."/>
            <person name="Zhou L."/>
            <person name="Fleischmann R.D."/>
            <person name="Sutton G.G."/>
            <person name="Blake J.A."/>
            <person name="FitzGerald L.M."/>
            <person name="Clayton R.A."/>
            <person name="Gocayne J.D."/>
            <person name="Kerlavage A.R."/>
            <person name="Dougherty B.A."/>
            <person name="Tomb J.-F."/>
            <person name="Adams M.D."/>
            <person name="Reich C.I."/>
            <person name="Overbeek R."/>
            <person name="Kirkness E.F."/>
            <person name="Weinstock K.G."/>
            <person name="Merrick J.M."/>
            <person name="Glodek A."/>
            <person name="Scott J.L."/>
            <person name="Geoghagen N.S.M."/>
            <person name="Weidman J.F."/>
            <person name="Fuhrmann J.L."/>
            <person name="Nguyen D."/>
            <person name="Utterback T.R."/>
            <person name="Kelley J.M."/>
            <person name="Peterson J.D."/>
            <person name="Sadow P.W."/>
            <person name="Hanna M.C."/>
            <person name="Cotton M.D."/>
            <person name="Roberts K.M."/>
            <person name="Hurst M.A."/>
            <person name="Kaine B.P."/>
            <person name="Borodovsky M."/>
            <person name="Klenk H.-P."/>
            <person name="Fraser C.M."/>
            <person name="Smith H.O."/>
            <person name="Woese C.R."/>
            <person name="Venter J.C."/>
        </authorList>
    </citation>
    <scope>NUCLEOTIDE SEQUENCE [LARGE SCALE GENOMIC DNA]</scope>
    <source>
        <strain>ATCC 43067 / DSM 2661 / JAL-1 / JCM 10045 / NBRC 100440</strain>
    </source>
</reference>
<gene>
    <name type="ordered locus">MJ0168</name>
</gene>
<organism>
    <name type="scientific">Methanocaldococcus jannaschii (strain ATCC 43067 / DSM 2661 / JAL-1 / JCM 10045 / NBRC 100440)</name>
    <name type="common">Methanococcus jannaschii</name>
    <dbReference type="NCBI Taxonomy" id="243232"/>
    <lineage>
        <taxon>Archaea</taxon>
        <taxon>Methanobacteriati</taxon>
        <taxon>Methanobacteriota</taxon>
        <taxon>Methanomada group</taxon>
        <taxon>Methanococci</taxon>
        <taxon>Methanococcales</taxon>
        <taxon>Methanocaldococcaceae</taxon>
        <taxon>Methanocaldococcus</taxon>
    </lineage>
</organism>
<dbReference type="EMBL" id="L77117">
    <property type="protein sequence ID" value="AAB98153.1"/>
    <property type="molecule type" value="Genomic_DNA"/>
</dbReference>
<dbReference type="PIR" id="A64321">
    <property type="entry name" value="A64321"/>
</dbReference>
<dbReference type="RefSeq" id="WP_010869663.1">
    <property type="nucleotide sequence ID" value="NC_000909.1"/>
</dbReference>
<dbReference type="SMR" id="Q57632"/>
<dbReference type="FunCoup" id="Q57632">
    <property type="interactions" value="3"/>
</dbReference>
<dbReference type="STRING" id="243232.MJ_0168"/>
<dbReference type="PaxDb" id="243232-MJ_0168"/>
<dbReference type="EnsemblBacteria" id="AAB98153">
    <property type="protein sequence ID" value="AAB98153"/>
    <property type="gene ID" value="MJ_0168"/>
</dbReference>
<dbReference type="KEGG" id="mja:MJ_0168"/>
<dbReference type="eggNOG" id="arCOG02144">
    <property type="taxonomic scope" value="Archaea"/>
</dbReference>
<dbReference type="HOGENOM" id="CLU_192667_0_0_2"/>
<dbReference type="InParanoid" id="Q57632"/>
<dbReference type="PhylomeDB" id="Q57632"/>
<dbReference type="Proteomes" id="UP000000805">
    <property type="component" value="Chromosome"/>
</dbReference>
<dbReference type="GO" id="GO:0005694">
    <property type="term" value="C:chromosome"/>
    <property type="evidence" value="ECO:0007669"/>
    <property type="project" value="UniProtKB-SubCell"/>
</dbReference>
<dbReference type="GO" id="GO:0005737">
    <property type="term" value="C:cytoplasm"/>
    <property type="evidence" value="ECO:0007669"/>
    <property type="project" value="UniProtKB-SubCell"/>
</dbReference>
<dbReference type="GO" id="GO:0003677">
    <property type="term" value="F:DNA binding"/>
    <property type="evidence" value="ECO:0007669"/>
    <property type="project" value="UniProtKB-KW"/>
</dbReference>
<dbReference type="GO" id="GO:0046982">
    <property type="term" value="F:protein heterodimerization activity"/>
    <property type="evidence" value="ECO:0007669"/>
    <property type="project" value="InterPro"/>
</dbReference>
<dbReference type="CDD" id="cd22909">
    <property type="entry name" value="HFD_archaea_histone-like"/>
    <property type="match status" value="1"/>
</dbReference>
<dbReference type="Gene3D" id="1.10.20.10">
    <property type="entry name" value="Histone, subunit A"/>
    <property type="match status" value="1"/>
</dbReference>
<dbReference type="InterPro" id="IPR050947">
    <property type="entry name" value="Archaeal_histone_HMF"/>
</dbReference>
<dbReference type="InterPro" id="IPR003958">
    <property type="entry name" value="CBFA_NFYB_domain"/>
</dbReference>
<dbReference type="InterPro" id="IPR009072">
    <property type="entry name" value="Histone-fold"/>
</dbReference>
<dbReference type="InterPro" id="IPR050004">
    <property type="entry name" value="HmfB-like"/>
</dbReference>
<dbReference type="InterPro" id="IPR004823">
    <property type="entry name" value="TAF_TATA-bd_Histone-like_dom"/>
</dbReference>
<dbReference type="NCBIfam" id="NF043032">
    <property type="entry name" value="archaea_histone"/>
    <property type="match status" value="1"/>
</dbReference>
<dbReference type="PANTHER" id="PTHR47828">
    <property type="entry name" value="ARCHAEAL HISTONE A"/>
    <property type="match status" value="1"/>
</dbReference>
<dbReference type="PANTHER" id="PTHR47828:SF1">
    <property type="entry name" value="ARCHAEAL HISTONE A"/>
    <property type="match status" value="1"/>
</dbReference>
<dbReference type="Pfam" id="PF00808">
    <property type="entry name" value="CBFD_NFYB_HMF"/>
    <property type="match status" value="1"/>
</dbReference>
<dbReference type="SMART" id="SM00803">
    <property type="entry name" value="TAF"/>
    <property type="match status" value="1"/>
</dbReference>
<dbReference type="SUPFAM" id="SSF47113">
    <property type="entry name" value="Histone-fold"/>
    <property type="match status" value="1"/>
</dbReference>
<sequence length="67" mass="7384">MAELPVAPFERILKKAGAERVSRAAAEYLAEAVEEIALEIAKEAVELAKHAKRKTVKVEDIKLALKK</sequence>
<name>HJA1_METJA</name>